<protein>
    <recommendedName>
        <fullName evidence="5">Bifunctional premutilin synthase</fullName>
        <shortName evidence="5">PS</shortName>
    </recommendedName>
    <domain>
        <recommendedName>
            <fullName evidence="5">Class II diterpene cyclase</fullName>
            <ecNumber evidence="5">5.5.1.-</ecNumber>
        </recommendedName>
    </domain>
    <domain>
        <recommendedName>
            <fullName evidence="5">Class I diterpene synthase</fullName>
            <ecNumber evidence="5">4.2.3.-</ecNumber>
        </recommendedName>
    </domain>
</protein>
<proteinExistence type="evidence at protein level"/>
<reference key="1">
    <citation type="journal article" date="2017" name="ChemBioChem">
        <title>Biosynthetic machinery of diterpene pleuromutilin isolated from basidiomycete fungi.</title>
        <authorList>
            <person name="Yamane M."/>
            <person name="Minami A."/>
            <person name="Liu C."/>
            <person name="Ozaki T."/>
            <person name="Takeuchi I."/>
            <person name="Tsukagoshi T."/>
            <person name="Tokiwano T."/>
            <person name="Gomi K."/>
            <person name="Oikawa H."/>
        </authorList>
    </citation>
    <scope>NUCLEOTIDE SEQUENCE [GENOMIC DNA]</scope>
    <scope>FUNCTION</scope>
    <scope>CATALYTIC ACTIVITY</scope>
    <scope>COFACTOR</scope>
    <scope>MUTAGENESIS OF ASP-311 AND ASP-649</scope>
    <scope>PATHWAY</scope>
    <source>
        <strain>ATCC 20527</strain>
    </source>
</reference>
<evidence type="ECO:0000250" key="1">
    <source>
        <dbReference type="UniProtKB" id="A0A2L0VXR0"/>
    </source>
</evidence>
<evidence type="ECO:0000250" key="2">
    <source>
        <dbReference type="UniProtKB" id="Q40577"/>
    </source>
</evidence>
<evidence type="ECO:0000256" key="3">
    <source>
        <dbReference type="SAM" id="MobiDB-lite"/>
    </source>
</evidence>
<evidence type="ECO:0000269" key="4">
    <source>
    </source>
</evidence>
<evidence type="ECO:0000303" key="5">
    <source>
    </source>
</evidence>
<evidence type="ECO:0000305" key="6"/>
<comment type="function">
    <text evidence="1 4">Bifunctional premutilin synthase; part of the gene cluster that mediates the biosynthesis of pleuromutilin, a tricyclic diterpene showing antibacterial properties (PubMed:28924980). The geranylgeranyl diphosphate (GGPP) synthase ple4 catalyzes the first step in pleuromutilin biosynthesis (PubMed:28924980). GGPP is then substrate of the premutilin synthase (PS) ple3 to yield premutilin (PubMed:28924980). Premutilin synthase is a bifunctional enzyme composed of the fusion of a class II diterpene cyclase (DTC) and a class I diterpene synthase (DTS), with the corresponding domains and active sites containing characteristic aspartate-rich motifs (By similarity). GGPP is first converted to mutildienyl-diphosphate (MPP) at the class II DTC site (By similarity). MPP is subsequently further cyclized at the class I DTS site, followed by a 1,5-hydride shift and addition of water prior to terminating deprotonation, to yield premutilin (By similarity). The cytochrome P450 monooxygenases ple5 and ple6 hydroxylate premutilin at C-11 and C-3, respectively, producing 11-hydroxypremutilin and 3-hydroxypremutilin (PubMed:28924980). The combination of the actions of both ple5 and ple6 leads to the production of 3,11-dihydroxypremutilin (PubMed:28924980). The short chain dehydrogenase ple7 further converts 3,11-dihydroxypremutilin into mutilin (PubMed:28924980). The acetyltransferase ple2 then acetylates mutilin to produce 14-O-acetylmutilin (PubMed:28924980). Finally, the cytochrome P450 monooxygenase ple1 catalyzes hydroxylation on the alpha position of the acetyl side chain of 14-O-acetylmutilin to yield pleuromutilin (PubMed:28924980).</text>
</comment>
<comment type="cofactor">
    <cofactor evidence="4">
        <name>Mg(2+)</name>
        <dbReference type="ChEBI" id="CHEBI:18420"/>
    </cofactor>
    <text evidence="2">Binds 3 Mg(2+) ions per subunit.</text>
</comment>
<comment type="pathway">
    <text evidence="4">Secondary metabolite biosynthesis; terpenoid biosynthesis.</text>
</comment>
<comment type="domain">
    <text evidence="4">The class II DTC active site contains a DXDD motif from which the middle Asp acts as the catalytic acid in this protonation-initiated cyclization reaction, while the class I DTS active site contains a DDXXD motif that binds divalent magnesium cofactors required for the catalyzed allylic diphosphate ester ionization-initiated reaction, with the first Asp playing a particularly key role.</text>
</comment>
<comment type="similarity">
    <text evidence="6">Belongs to the terpene synthase family.</text>
</comment>
<name>PLE3_RHOPP</name>
<dbReference type="EC" id="5.5.1.-" evidence="5"/>
<dbReference type="EC" id="4.2.3.-" evidence="5"/>
<dbReference type="EMBL" id="LC314149">
    <property type="protein sequence ID" value="BCI98771.1"/>
    <property type="molecule type" value="Genomic_DNA"/>
</dbReference>
<dbReference type="SMR" id="A0A6S6QR11"/>
<dbReference type="UniPathway" id="UPA00213"/>
<dbReference type="GO" id="GO:0016853">
    <property type="term" value="F:isomerase activity"/>
    <property type="evidence" value="ECO:0007669"/>
    <property type="project" value="UniProtKB-KW"/>
</dbReference>
<dbReference type="GO" id="GO:0000287">
    <property type="term" value="F:magnesium ion binding"/>
    <property type="evidence" value="ECO:0007669"/>
    <property type="project" value="TreeGrafter"/>
</dbReference>
<dbReference type="GO" id="GO:0010333">
    <property type="term" value="F:terpene synthase activity"/>
    <property type="evidence" value="ECO:0007669"/>
    <property type="project" value="InterPro"/>
</dbReference>
<dbReference type="GO" id="GO:0016102">
    <property type="term" value="P:diterpenoid biosynthetic process"/>
    <property type="evidence" value="ECO:0007669"/>
    <property type="project" value="TreeGrafter"/>
</dbReference>
<dbReference type="Gene3D" id="1.50.10.160">
    <property type="match status" value="1"/>
</dbReference>
<dbReference type="Gene3D" id="1.50.10.20">
    <property type="match status" value="1"/>
</dbReference>
<dbReference type="InterPro" id="IPR050148">
    <property type="entry name" value="Terpene_synthase-like"/>
</dbReference>
<dbReference type="InterPro" id="IPR008930">
    <property type="entry name" value="Terpenoid_cyclase/PrenylTrfase"/>
</dbReference>
<dbReference type="PANTHER" id="PTHR31739:SF25">
    <property type="entry name" value="(E,E)-GERANYLLINALOOL SYNTHASE"/>
    <property type="match status" value="1"/>
</dbReference>
<dbReference type="PANTHER" id="PTHR31739">
    <property type="entry name" value="ENT-COPALYL DIPHOSPHATE SYNTHASE, CHLOROPLASTIC"/>
    <property type="match status" value="1"/>
</dbReference>
<dbReference type="SUPFAM" id="SSF48239">
    <property type="entry name" value="Terpenoid cyclases/Protein prenyltransferases"/>
    <property type="match status" value="1"/>
</dbReference>
<feature type="chain" id="PRO_0000453724" description="Bifunctional premutilin synthase">
    <location>
        <begin position="1"/>
        <end position="959"/>
    </location>
</feature>
<feature type="region of interest" description="Class II diterpene cyclase" evidence="1">
    <location>
        <begin position="1"/>
        <end position="542"/>
    </location>
</feature>
<feature type="region of interest" description="Class I diterpene synthase" evidence="1">
    <location>
        <begin position="543"/>
        <end position="959"/>
    </location>
</feature>
<feature type="region of interest" description="Disordered" evidence="3">
    <location>
        <begin position="931"/>
        <end position="959"/>
    </location>
</feature>
<feature type="short sequence motif" description="DXDD motif" evidence="1">
    <location>
        <begin position="309"/>
        <end position="312"/>
    </location>
</feature>
<feature type="short sequence motif" description="DDXXD motif" evidence="1">
    <location>
        <begin position="649"/>
        <end position="653"/>
    </location>
</feature>
<feature type="compositionally biased region" description="Low complexity" evidence="3">
    <location>
        <begin position="934"/>
        <end position="959"/>
    </location>
</feature>
<feature type="active site" description="For class II diterpene cyclase activity" evidence="1">
    <location>
        <position position="311"/>
    </location>
</feature>
<feature type="active site" description="For class I diterpene synthase activity" evidence="1">
    <location>
        <position position="649"/>
    </location>
</feature>
<feature type="binding site" evidence="2">
    <location>
        <position position="649"/>
    </location>
    <ligand>
        <name>Mg(2+)</name>
        <dbReference type="ChEBI" id="CHEBI:18420"/>
        <label>1</label>
    </ligand>
</feature>
<feature type="binding site" evidence="2">
    <location>
        <position position="649"/>
    </location>
    <ligand>
        <name>Mg(2+)</name>
        <dbReference type="ChEBI" id="CHEBI:18420"/>
        <label>2</label>
    </ligand>
</feature>
<feature type="binding site" evidence="2">
    <location>
        <position position="653"/>
    </location>
    <ligand>
        <name>Mg(2+)</name>
        <dbReference type="ChEBI" id="CHEBI:18420"/>
        <label>1</label>
    </ligand>
</feature>
<feature type="binding site" evidence="2">
    <location>
        <position position="653"/>
    </location>
    <ligand>
        <name>Mg(2+)</name>
        <dbReference type="ChEBI" id="CHEBI:18420"/>
        <label>2</label>
    </ligand>
</feature>
<feature type="binding site" evidence="2">
    <location>
        <position position="824"/>
    </location>
    <ligand>
        <name>Mg(2+)</name>
        <dbReference type="ChEBI" id="CHEBI:18420"/>
        <label>3</label>
    </ligand>
</feature>
<organism>
    <name type="scientific">Rhodocybe pseudopiperita</name>
    <name type="common">Clitopilus pseudopiperitus</name>
    <dbReference type="NCBI Taxonomy" id="693819"/>
    <lineage>
        <taxon>Eukaryota</taxon>
        <taxon>Fungi</taxon>
        <taxon>Dikarya</taxon>
        <taxon>Basidiomycota</taxon>
        <taxon>Agaricomycotina</taxon>
        <taxon>Agaricomycetes</taxon>
        <taxon>Agaricomycetidae</taxon>
        <taxon>Agaricales</taxon>
        <taxon>Tricholomatineae</taxon>
        <taxon>Entolomataceae</taxon>
        <taxon>Rhodocybe</taxon>
    </lineage>
</organism>
<keyword id="KW-0413">Isomerase</keyword>
<keyword id="KW-0456">Lyase</keyword>
<keyword id="KW-0460">Magnesium</keyword>
<keyword id="KW-0479">Metal-binding</keyword>
<accession>A0A6S6QR11</accession>
<gene>
    <name evidence="5" type="primary">ple3</name>
</gene>
<sequence>MGLSEDLHARARTLMQTLESALNTPGSRGIGTANPTIYDTAWVAMVSREIDGKQVFVFPETFTYIYEHQEADGSWSGDGSLIDSIVNTLACLLALKMHESNASKPDIPARARAAQHYLNDALQRWDIMETERVAYEMIVPCLLKQLDTFGVSFTFPHRDLLYNMYAGKLAKLNWEAIYAKNSSLLHCMEAFVGVCDFDRMPHLLRDGNFMATPSTTAAYLMKATKWDDRAENYLRHVIEVYAPHGRDVVPNLWPMTFFEIVWSLSSLYDNNLDFAQMDPECLDRIALKLREFLVAGKGVLGFVPGTTHDADMSSKTLMLLQVLNHPYSHDEFVTEFEAPTYFRCYSFERNASVTVNSNCLMSLLHAPDVNKYESQIVKIATYVADVWWTSAGVVKDKWNVSEWYSSMLSSQALVRLLFEHGKGNLKSISEELLSKVSIACFTMISRILQSQKPDGSWGCAEETSYALITLANVASLPTCDLIRDHLNQVIESAKAFLTSIFYARPAAKPEDRVWIDKVTYSVESFRDAYLVSALNVPIPRFDPASITTLPPISQTLPKELAKFFGRLDMFKPAPDWRKLTWGIEATLMGPELNRVPSLTFEKVEKGANGKWFEFLPYMTIAPSGLQGTPISSQGMLDVLVLIRALYNTDDYLDMTLIKATNKDLNDLKKKIRDLFANPTSFSTLNEVPDDRMPTHIEVIERFAHSLLNYPRIQLASDNDKNLLRSEIEHYFLAGIAQCEENILLRERGLDKERVGTSHYRWTHVIGADNVAGTIALVFAFCLLGHQINEERGSRDLVDVFPTPVLKYLFNDCVMHFGAFSRLANDLHSISRDFNEVNLNSIMFSEFTGPKSGTDTEKAREAALLELVKYERKETDDAFEYLVQQLTPHVGAKRARDYINIIRVTYLHTALYDDLGRLTRADISNANREVSKGANGVKKTNGLTTNGTKATANGSNGIHH</sequence>